<organism>
    <name type="scientific">Hyphomonas neptunium (strain ATCC 15444)</name>
    <dbReference type="NCBI Taxonomy" id="228405"/>
    <lineage>
        <taxon>Bacteria</taxon>
        <taxon>Pseudomonadati</taxon>
        <taxon>Pseudomonadota</taxon>
        <taxon>Alphaproteobacteria</taxon>
        <taxon>Hyphomonadales</taxon>
        <taxon>Hyphomonadaceae</taxon>
        <taxon>Hyphomonas</taxon>
    </lineage>
</organism>
<keyword id="KW-1185">Reference proteome</keyword>
<keyword id="KW-0687">Ribonucleoprotein</keyword>
<keyword id="KW-0689">Ribosomal protein</keyword>
<feature type="chain" id="PRO_0000302217" description="Large ribosomal subunit protein bL36">
    <location>
        <begin position="1"/>
        <end position="41"/>
    </location>
</feature>
<comment type="similarity">
    <text evidence="1">Belongs to the bacterial ribosomal protein bL36 family.</text>
</comment>
<name>RL36_HYPNA</name>
<reference key="1">
    <citation type="journal article" date="2006" name="J. Bacteriol.">
        <title>Comparative genomic evidence for a close relationship between the dimorphic prosthecate bacteria Hyphomonas neptunium and Caulobacter crescentus.</title>
        <authorList>
            <person name="Badger J.H."/>
            <person name="Hoover T.R."/>
            <person name="Brun Y.V."/>
            <person name="Weiner R.M."/>
            <person name="Laub M.T."/>
            <person name="Alexandre G."/>
            <person name="Mrazek J."/>
            <person name="Ren Q."/>
            <person name="Paulsen I.T."/>
            <person name="Nelson K.E."/>
            <person name="Khouri H.M."/>
            <person name="Radune D."/>
            <person name="Sosa J."/>
            <person name="Dodson R.J."/>
            <person name="Sullivan S.A."/>
            <person name="Rosovitz M.J."/>
            <person name="Madupu R."/>
            <person name="Brinkac L.M."/>
            <person name="Durkin A.S."/>
            <person name="Daugherty S.C."/>
            <person name="Kothari S.P."/>
            <person name="Giglio M.G."/>
            <person name="Zhou L."/>
            <person name="Haft D.H."/>
            <person name="Selengut J.D."/>
            <person name="Davidsen T.M."/>
            <person name="Yang Q."/>
            <person name="Zafar N."/>
            <person name="Ward N.L."/>
        </authorList>
    </citation>
    <scope>NUCLEOTIDE SEQUENCE [LARGE SCALE GENOMIC DNA]</scope>
    <source>
        <strain>ATCC 15444</strain>
    </source>
</reference>
<proteinExistence type="inferred from homology"/>
<dbReference type="EMBL" id="CP000158">
    <property type="protein sequence ID" value="ABI77080.1"/>
    <property type="molecule type" value="Genomic_DNA"/>
</dbReference>
<dbReference type="SMR" id="Q0BWX0"/>
<dbReference type="STRING" id="228405.HNE_3350"/>
<dbReference type="KEGG" id="hne:HNE_3350"/>
<dbReference type="eggNOG" id="COG0257">
    <property type="taxonomic scope" value="Bacteria"/>
</dbReference>
<dbReference type="HOGENOM" id="CLU_135723_3_2_5"/>
<dbReference type="Proteomes" id="UP000001959">
    <property type="component" value="Chromosome"/>
</dbReference>
<dbReference type="GO" id="GO:1990904">
    <property type="term" value="C:ribonucleoprotein complex"/>
    <property type="evidence" value="ECO:0007669"/>
    <property type="project" value="UniProtKB-KW"/>
</dbReference>
<dbReference type="GO" id="GO:0005840">
    <property type="term" value="C:ribosome"/>
    <property type="evidence" value="ECO:0007669"/>
    <property type="project" value="UniProtKB-KW"/>
</dbReference>
<dbReference type="GO" id="GO:0003735">
    <property type="term" value="F:structural constituent of ribosome"/>
    <property type="evidence" value="ECO:0007669"/>
    <property type="project" value="InterPro"/>
</dbReference>
<dbReference type="GO" id="GO:0006412">
    <property type="term" value="P:translation"/>
    <property type="evidence" value="ECO:0007669"/>
    <property type="project" value="UniProtKB-UniRule"/>
</dbReference>
<dbReference type="HAMAP" id="MF_00251">
    <property type="entry name" value="Ribosomal_bL36"/>
    <property type="match status" value="1"/>
</dbReference>
<dbReference type="InterPro" id="IPR000473">
    <property type="entry name" value="Ribosomal_bL36"/>
</dbReference>
<dbReference type="InterPro" id="IPR035977">
    <property type="entry name" value="Ribosomal_bL36_sp"/>
</dbReference>
<dbReference type="InterPro" id="IPR047621">
    <property type="entry name" value="Ribosomal_L36_bact"/>
</dbReference>
<dbReference type="NCBIfam" id="NF002021">
    <property type="entry name" value="PRK00831.1"/>
    <property type="match status" value="1"/>
</dbReference>
<dbReference type="NCBIfam" id="TIGR01022">
    <property type="entry name" value="rpmJ_bact"/>
    <property type="match status" value="1"/>
</dbReference>
<dbReference type="PANTHER" id="PTHR47781">
    <property type="entry name" value="50S RIBOSOMAL PROTEIN L36 2"/>
    <property type="match status" value="1"/>
</dbReference>
<dbReference type="PANTHER" id="PTHR47781:SF1">
    <property type="entry name" value="LARGE RIBOSOMAL SUBUNIT PROTEIN BL36B"/>
    <property type="match status" value="1"/>
</dbReference>
<dbReference type="Pfam" id="PF00444">
    <property type="entry name" value="Ribosomal_L36"/>
    <property type="match status" value="1"/>
</dbReference>
<dbReference type="SUPFAM" id="SSF57840">
    <property type="entry name" value="Ribosomal protein L36"/>
    <property type="match status" value="1"/>
</dbReference>
<dbReference type="PROSITE" id="PS00828">
    <property type="entry name" value="RIBOSOMAL_L36"/>
    <property type="match status" value="1"/>
</dbReference>
<protein>
    <recommendedName>
        <fullName evidence="1">Large ribosomal subunit protein bL36</fullName>
    </recommendedName>
    <alternativeName>
        <fullName evidence="2">50S ribosomal protein L36</fullName>
    </alternativeName>
</protein>
<accession>Q0BWX0</accession>
<sequence>MKVRSSLKSLKSRHRDCKIVRRKGRVYVINKTDPRFKAKQG</sequence>
<gene>
    <name evidence="1" type="primary">rpmJ</name>
    <name type="ordered locus">HNE_3350</name>
</gene>
<evidence type="ECO:0000255" key="1">
    <source>
        <dbReference type="HAMAP-Rule" id="MF_00251"/>
    </source>
</evidence>
<evidence type="ECO:0000305" key="2"/>